<accession>Q5MR23</accession>
<protein>
    <recommendedName>
        <fullName evidence="8">Receptor-like protein 9DC3</fullName>
    </recommendedName>
</protein>
<organism>
    <name type="scientific">Solanum pimpinellifolium</name>
    <name type="common">Currant tomato</name>
    <name type="synonym">Lycopersicon pimpinellifolium</name>
    <dbReference type="NCBI Taxonomy" id="4084"/>
    <lineage>
        <taxon>Eukaryota</taxon>
        <taxon>Viridiplantae</taxon>
        <taxon>Streptophyta</taxon>
        <taxon>Embryophyta</taxon>
        <taxon>Tracheophyta</taxon>
        <taxon>Spermatophyta</taxon>
        <taxon>Magnoliopsida</taxon>
        <taxon>eudicotyledons</taxon>
        <taxon>Gunneridae</taxon>
        <taxon>Pentapetalae</taxon>
        <taxon>asterids</taxon>
        <taxon>lamiids</taxon>
        <taxon>Solanales</taxon>
        <taxon>Solanaceae</taxon>
        <taxon>Solanoideae</taxon>
        <taxon>Solaneae</taxon>
        <taxon>Solanum</taxon>
        <taxon>Solanum subgen. Lycopersicon</taxon>
    </lineage>
</organism>
<feature type="signal peptide" evidence="3">
    <location>
        <begin position="1"/>
        <end position="21"/>
    </location>
</feature>
<feature type="chain" id="PRO_5005697799" description="Receptor-like protein 9DC3">
    <location>
        <begin position="22"/>
        <end position="863"/>
    </location>
</feature>
<feature type="topological domain" description="Extracellular" evidence="3">
    <location>
        <begin position="22"/>
        <end position="812"/>
    </location>
</feature>
<feature type="transmembrane region" description="Helical" evidence="3">
    <location>
        <begin position="813"/>
        <end position="833"/>
    </location>
</feature>
<feature type="topological domain" description="Cytoplasmic" evidence="3">
    <location>
        <begin position="834"/>
        <end position="863"/>
    </location>
</feature>
<feature type="repeat" description="LRR 1; degenerate" evidence="6">
    <location>
        <begin position="91"/>
        <end position="114"/>
    </location>
</feature>
<feature type="repeat" description="LRR 2" evidence="3">
    <location>
        <begin position="115"/>
        <end position="138"/>
    </location>
</feature>
<feature type="repeat" description="LRR 3" evidence="3">
    <location>
        <begin position="140"/>
        <end position="163"/>
    </location>
</feature>
<feature type="repeat" description="LRR 4; degenerate" evidence="6">
    <location>
        <begin position="164"/>
        <end position="190"/>
    </location>
</feature>
<feature type="repeat" description="LRR 5" evidence="3">
    <location>
        <begin position="191"/>
        <end position="213"/>
    </location>
</feature>
<feature type="repeat" description="LRR 6" evidence="3">
    <location>
        <begin position="214"/>
        <end position="237"/>
    </location>
</feature>
<feature type="repeat" description="LRR 7" evidence="3">
    <location>
        <begin position="240"/>
        <end position="262"/>
    </location>
</feature>
<feature type="repeat" description="LRR 8" evidence="3">
    <location>
        <begin position="264"/>
        <end position="286"/>
    </location>
</feature>
<feature type="repeat" description="LRR 9" evidence="3">
    <location>
        <begin position="287"/>
        <end position="311"/>
    </location>
</feature>
<feature type="repeat" description="LRR 10" evidence="3">
    <location>
        <begin position="312"/>
        <end position="336"/>
    </location>
</feature>
<feature type="repeat" description="LRR 11; degenerate" evidence="6">
    <location>
        <begin position="337"/>
        <end position="357"/>
    </location>
</feature>
<feature type="repeat" description="LRR 12" evidence="3">
    <location>
        <begin position="358"/>
        <end position="382"/>
    </location>
</feature>
<feature type="repeat" description="LRR 13" evidence="3">
    <location>
        <begin position="383"/>
        <end position="406"/>
    </location>
</feature>
<feature type="repeat" description="LRR 14" evidence="3">
    <location>
        <begin position="408"/>
        <end position="428"/>
    </location>
</feature>
<feature type="repeat" description="LRR 15" evidence="3">
    <location>
        <begin position="429"/>
        <end position="452"/>
    </location>
</feature>
<feature type="repeat" description="LRR 16" evidence="3">
    <location>
        <begin position="454"/>
        <end position="476"/>
    </location>
</feature>
<feature type="repeat" description="LRR 17" evidence="3">
    <location>
        <begin position="477"/>
        <end position="500"/>
    </location>
</feature>
<feature type="repeat" description="LRR 18" evidence="3">
    <location>
        <begin position="502"/>
        <end position="524"/>
    </location>
</feature>
<feature type="repeat" description="LRR 19" evidence="3">
    <location>
        <begin position="525"/>
        <end position="549"/>
    </location>
</feature>
<feature type="repeat" description="LRR 20" evidence="3">
    <location>
        <begin position="551"/>
        <end position="572"/>
    </location>
</feature>
<feature type="repeat" description="LRR 21" evidence="3">
    <location>
        <begin position="573"/>
        <end position="597"/>
    </location>
</feature>
<feature type="repeat" description="LRR 22" evidence="3">
    <location>
        <begin position="599"/>
        <end position="623"/>
    </location>
</feature>
<feature type="repeat" description="LRR 23" evidence="3">
    <location>
        <begin position="667"/>
        <end position="690"/>
    </location>
</feature>
<feature type="repeat" description="LRR 24" evidence="3">
    <location>
        <begin position="691"/>
        <end position="714"/>
    </location>
</feature>
<feature type="repeat" description="LRR 25" evidence="3">
    <location>
        <begin position="715"/>
        <end position="739"/>
    </location>
</feature>
<feature type="repeat" description="LRR 26" evidence="3">
    <location>
        <begin position="741"/>
        <end position="759"/>
    </location>
</feature>
<feature type="region of interest" description="N-cap" evidence="2">
    <location>
        <begin position="24"/>
        <end position="90"/>
    </location>
</feature>
<feature type="region of interest" description="C-cap/acidic domain" evidence="2">
    <location>
        <begin position="760"/>
        <end position="812"/>
    </location>
</feature>
<feature type="glycosylation site" description="N-linked (GlcNAc...) asparagine" evidence="4">
    <location>
        <position position="71"/>
    </location>
</feature>
<feature type="glycosylation site" description="N-linked (GlcNAc...) asparagine" evidence="4">
    <location>
        <position position="108"/>
    </location>
</feature>
<feature type="glycosylation site" description="N-linked (GlcNAc...) asparagine" evidence="4">
    <location>
        <position position="190"/>
    </location>
</feature>
<feature type="glycosylation site" description="N-linked (GlcNAc...) asparagine" evidence="4">
    <location>
        <position position="203"/>
    </location>
</feature>
<feature type="glycosylation site" description="N-linked (GlcNAc...) asparagine" evidence="4">
    <location>
        <position position="211"/>
    </location>
</feature>
<feature type="glycosylation site" description="N-linked (GlcNAc...) asparagine" evidence="4">
    <location>
        <position position="261"/>
    </location>
</feature>
<feature type="glycosylation site" description="N-linked (GlcNAc...) asparagine" evidence="4">
    <location>
        <position position="299"/>
    </location>
</feature>
<feature type="glycosylation site" description="N-linked (GlcNAc...) asparagine" evidence="4">
    <location>
        <position position="310"/>
    </location>
</feature>
<feature type="glycosylation site" description="N-linked (GlcNAc...) asparagine" evidence="4">
    <location>
        <position position="378"/>
    </location>
</feature>
<feature type="glycosylation site" description="N-linked (GlcNAc...) asparagine" evidence="4">
    <location>
        <position position="396"/>
    </location>
</feature>
<feature type="glycosylation site" description="N-linked (GlcNAc...) asparagine" evidence="4">
    <location>
        <position position="416"/>
    </location>
</feature>
<feature type="glycosylation site" description="N-linked (GlcNAc...) asparagine" evidence="4">
    <location>
        <position position="464"/>
    </location>
</feature>
<feature type="glycosylation site" description="N-linked (GlcNAc...) asparagine" evidence="4">
    <location>
        <position position="519"/>
    </location>
</feature>
<feature type="glycosylation site" description="N-linked (GlcNAc...) asparagine" evidence="4">
    <location>
        <position position="563"/>
    </location>
</feature>
<feature type="glycosylation site" description="N-linked (GlcNAc...) asparagine" evidence="4">
    <location>
        <position position="674"/>
    </location>
</feature>
<feature type="glycosylation site" description="N-linked (GlcNAc...) asparagine" evidence="4">
    <location>
        <position position="698"/>
    </location>
</feature>
<feature type="glycosylation site" description="N-linked (GlcNAc...) asparagine" evidence="4">
    <location>
        <position position="714"/>
    </location>
</feature>
<feature type="glycosylation site" description="N-linked (GlcNAc...) asparagine" evidence="4">
    <location>
        <position position="746"/>
    </location>
</feature>
<feature type="glycosylation site" description="N-linked (GlcNAc...) asparagine" evidence="4">
    <location>
        <position position="767"/>
    </location>
</feature>
<sequence length="863" mass="96528">MGCVKLVFFMLYVFLFQLVSSSSLPHLCPEDQALALLQFKNMFTVNPNAFHYCPDITGREIQSYPRTLSWNKSTSCCSWDGVHCDETTGQVIALDLRCSQLQGKFHSNSSLFQLSNLKRLDLSNNNFIGSLISPKFGEFSDLTHLDLSDSSFTGVIPSEISHLSKLHVLLIGDQYGLSIVPHNFEPLLKNLTQLRELNLYEVNLSSTVPSNFSSHLTTLQLSGTGLRGLLPERVFHLSDLEFLDLSYNSQLMVRFPTTKWNSSASLMKLYVHSVNIADRIPESFSHLTSLHELDMGYTNLSGPIPKPLWNLTNIESLDLRYNHLEGPIPQLPIFEKLKKLSLFRNDNLDGGLEFLSFNTQLERLDLSSNSLTGPIPSNISGLQNLECLYLSSNHLNGSIPSWIFSLPSLVELDLSNNTFSGKIQEFKSKTLSAVTLKQNKLKGRIPNSLLNQKNLQLLLLSHNNISGHISSAICNLKTLILLDLGSNNLEGTIPQCVVERNEYLSHLDLSKNRLSGTINTTFSVGNILRVISLHGNKLTGKVPRSLINCKYLALLDLGNNQLNDTFPNWLGHLSQLKILSLRSNKLHGPIKSSGNTNLFTRLQIMDLSYNGFSGNLPESILGNLQAMKKIDESTRTPEYISDPYDFYYNYLTTITTKGQDYDSVRILDSNMIINLSKNRFEGRIPSIIGDLVGLRTLNLSHNVLEGHIPASFQNLSVLESLDLSSNKISGEIPQQLASLTFLEVLNLSHNHLVGCIPKGKQFDSFGNTSYQGNDGLCGFPLSKLCGGDDQVTTPAELDQEEEEEDSPMISWQGVLVGYGCGLVIGLSVIYIMWSTQYPAWFSRMHLKLEQIVTTRMKKHKKRY</sequence>
<keyword id="KW-1003">Cell membrane</keyword>
<keyword id="KW-0325">Glycoprotein</keyword>
<keyword id="KW-0433">Leucine-rich repeat</keyword>
<keyword id="KW-0472">Membrane</keyword>
<keyword id="KW-0611">Plant defense</keyword>
<keyword id="KW-0677">Repeat</keyword>
<keyword id="KW-0732">Signal</keyword>
<keyword id="KW-0812">Transmembrane</keyword>
<keyword id="KW-1133">Transmembrane helix</keyword>
<gene>
    <name evidence="8" type="primary">9DC3</name>
</gene>
<comment type="function">
    <text evidence="5">Involved in plant defense. Confers resistance to the fungal pathogen C.fulvum through recognition of the AVR9 elicitor protein.</text>
</comment>
<comment type="subcellular location">
    <subcellularLocation>
        <location evidence="6">Cell membrane</location>
        <topology evidence="6">Single-pass type I membrane protein</topology>
    </subcellularLocation>
</comment>
<comment type="domain">
    <text evidence="1">The extracellular leucine-rich repeats are required for the specificity of the elicitor protein recognition.</text>
</comment>
<comment type="similarity">
    <text evidence="6">Belongs to the RLP family.</text>
</comment>
<comment type="caution">
    <text evidence="7">In cv. LA101, 9DC1 results from the rearrangement in the Cf-9 disease resistance gene cluster between Cf-9 and Hcr9-9D, both originating from the cv. Cf9.</text>
</comment>
<evidence type="ECO:0000250" key="1">
    <source>
        <dbReference type="UniProtKB" id="Q40235"/>
    </source>
</evidence>
<evidence type="ECO:0000250" key="2">
    <source>
        <dbReference type="UniProtKB" id="Q946D6"/>
    </source>
</evidence>
<evidence type="ECO:0000255" key="3"/>
<evidence type="ECO:0000255" key="4">
    <source>
        <dbReference type="PROSITE-ProRule" id="PRU00498"/>
    </source>
</evidence>
<evidence type="ECO:0000269" key="5">
    <source>
    </source>
</evidence>
<evidence type="ECO:0000305" key="6"/>
<evidence type="ECO:0000305" key="7">
    <source>
    </source>
</evidence>
<evidence type="ECO:0000312" key="8">
    <source>
        <dbReference type="EMBL" id="AAT77550.1"/>
    </source>
</evidence>
<reference key="1">
    <citation type="journal article" date="2004" name="Genetics">
        <title>Rearrangements in the Cf-9 disease resistance gene cluster of wild tomato have resulted in three genes that mediate Avr9 responsiveness.</title>
        <authorList>
            <person name="Kruijt M."/>
            <person name="Brandwagt B.F."/>
            <person name="de Wit P.J."/>
        </authorList>
    </citation>
    <scope>NUCLEOTIDE SEQUENCE [GENOMIC DNA]</scope>
    <scope>FUNCTION</scope>
    <source>
        <strain>cv. LA1301</strain>
    </source>
</reference>
<name>9DC3_SOLPI</name>
<dbReference type="EMBL" id="AY569331">
    <property type="protein sequence ID" value="AAT77550.1"/>
    <property type="molecule type" value="Genomic_DNA"/>
</dbReference>
<dbReference type="SMR" id="Q5MR23"/>
<dbReference type="GlyCosmos" id="Q5MR23">
    <property type="glycosylation" value="19 sites, No reported glycans"/>
</dbReference>
<dbReference type="GO" id="GO:0005886">
    <property type="term" value="C:plasma membrane"/>
    <property type="evidence" value="ECO:0007669"/>
    <property type="project" value="UniProtKB-SubCell"/>
</dbReference>
<dbReference type="GO" id="GO:0050832">
    <property type="term" value="P:defense response to fungus"/>
    <property type="evidence" value="ECO:0000314"/>
    <property type="project" value="UniProtKB"/>
</dbReference>
<dbReference type="FunFam" id="3.80.10.10:FF:000111">
    <property type="entry name" value="LRR receptor-like serine/threonine-protein kinase ERECTA"/>
    <property type="match status" value="1"/>
</dbReference>
<dbReference type="FunFam" id="3.80.10.10:FF:000095">
    <property type="entry name" value="LRR receptor-like serine/threonine-protein kinase GSO1"/>
    <property type="match status" value="1"/>
</dbReference>
<dbReference type="FunFam" id="3.80.10.10:FF:000713">
    <property type="entry name" value="Receptor-like protein 48"/>
    <property type="match status" value="1"/>
</dbReference>
<dbReference type="FunFam" id="3.80.10.10:FF:001082">
    <property type="entry name" value="Receptor-like protein Cf-9"/>
    <property type="match status" value="1"/>
</dbReference>
<dbReference type="Gene3D" id="3.80.10.10">
    <property type="entry name" value="Ribonuclease Inhibitor"/>
    <property type="match status" value="4"/>
</dbReference>
<dbReference type="InterPro" id="IPR001611">
    <property type="entry name" value="Leu-rich_rpt"/>
</dbReference>
<dbReference type="InterPro" id="IPR003591">
    <property type="entry name" value="Leu-rich_rpt_typical-subtyp"/>
</dbReference>
<dbReference type="InterPro" id="IPR032675">
    <property type="entry name" value="LRR_dom_sf"/>
</dbReference>
<dbReference type="InterPro" id="IPR013210">
    <property type="entry name" value="LRR_N_plant-typ"/>
</dbReference>
<dbReference type="InterPro" id="IPR046956">
    <property type="entry name" value="RLP23-like"/>
</dbReference>
<dbReference type="PANTHER" id="PTHR48061">
    <property type="entry name" value="LEUCINE-RICH REPEAT RECEPTOR PROTEIN KINASE EMS1-LIKE-RELATED"/>
    <property type="match status" value="1"/>
</dbReference>
<dbReference type="PANTHER" id="PTHR48061:SF10">
    <property type="entry name" value="LEUCINE-RICH REPEAT-CONTAINING N-TERMINAL PLANT-TYPE DOMAIN-CONTAINING PROTEIN"/>
    <property type="match status" value="1"/>
</dbReference>
<dbReference type="Pfam" id="PF00560">
    <property type="entry name" value="LRR_1"/>
    <property type="match status" value="4"/>
</dbReference>
<dbReference type="Pfam" id="PF13855">
    <property type="entry name" value="LRR_8"/>
    <property type="match status" value="4"/>
</dbReference>
<dbReference type="Pfam" id="PF08263">
    <property type="entry name" value="LRRNT_2"/>
    <property type="match status" value="2"/>
</dbReference>
<dbReference type="PRINTS" id="PR00019">
    <property type="entry name" value="LEURICHRPT"/>
</dbReference>
<dbReference type="SMART" id="SM00365">
    <property type="entry name" value="LRR_SD22"/>
    <property type="match status" value="6"/>
</dbReference>
<dbReference type="SMART" id="SM00369">
    <property type="entry name" value="LRR_TYP"/>
    <property type="match status" value="8"/>
</dbReference>
<dbReference type="SUPFAM" id="SSF52058">
    <property type="entry name" value="L domain-like"/>
    <property type="match status" value="2"/>
</dbReference>
<proteinExistence type="inferred from homology"/>